<organism>
    <name type="scientific">Yersinia pseudotuberculosis serotype O:3 (strain YPIII)</name>
    <dbReference type="NCBI Taxonomy" id="502800"/>
    <lineage>
        <taxon>Bacteria</taxon>
        <taxon>Pseudomonadati</taxon>
        <taxon>Pseudomonadota</taxon>
        <taxon>Gammaproteobacteria</taxon>
        <taxon>Enterobacterales</taxon>
        <taxon>Yersiniaceae</taxon>
        <taxon>Yersinia</taxon>
    </lineage>
</organism>
<protein>
    <recommendedName>
        <fullName evidence="1">Autonomous glycyl radical cofactor</fullName>
    </recommendedName>
</protein>
<proteinExistence type="inferred from homology"/>
<evidence type="ECO:0000255" key="1">
    <source>
        <dbReference type="HAMAP-Rule" id="MF_00806"/>
    </source>
</evidence>
<sequence length="127" mass="14353">MITGIQITKANNEALLNSFWLLDDEKAELRCVCAKSGYAEDQIVPTSELGEIEYREVPLEVQPTVRVEGGQHLNVNVLSRDTLEDAVKNPEKYPQLTIRVSGYAVRFNSLTPEQQRDVITRTFTESL</sequence>
<gene>
    <name evidence="1" type="primary">grcA</name>
    <name type="ordered locus">YPK_1174</name>
</gene>
<accession>B1JRB2</accession>
<name>GRCA_YERPY</name>
<keyword id="KW-0556">Organic radical</keyword>
<reference key="1">
    <citation type="submission" date="2008-02" db="EMBL/GenBank/DDBJ databases">
        <title>Complete sequence of Yersinia pseudotuberculosis YPIII.</title>
        <authorList>
            <consortium name="US DOE Joint Genome Institute"/>
            <person name="Copeland A."/>
            <person name="Lucas S."/>
            <person name="Lapidus A."/>
            <person name="Glavina del Rio T."/>
            <person name="Dalin E."/>
            <person name="Tice H."/>
            <person name="Bruce D."/>
            <person name="Goodwin L."/>
            <person name="Pitluck S."/>
            <person name="Munk A.C."/>
            <person name="Brettin T."/>
            <person name="Detter J.C."/>
            <person name="Han C."/>
            <person name="Tapia R."/>
            <person name="Schmutz J."/>
            <person name="Larimer F."/>
            <person name="Land M."/>
            <person name="Hauser L."/>
            <person name="Challacombe J.F."/>
            <person name="Green L."/>
            <person name="Lindler L.E."/>
            <person name="Nikolich M.P."/>
            <person name="Richardson P."/>
        </authorList>
    </citation>
    <scope>NUCLEOTIDE SEQUENCE [LARGE SCALE GENOMIC DNA]</scope>
    <source>
        <strain>YPIII</strain>
    </source>
</reference>
<dbReference type="EMBL" id="CP000950">
    <property type="protein sequence ID" value="ACA67472.1"/>
    <property type="molecule type" value="Genomic_DNA"/>
</dbReference>
<dbReference type="RefSeq" id="WP_002209664.1">
    <property type="nucleotide sequence ID" value="NZ_CP009792.1"/>
</dbReference>
<dbReference type="SMR" id="B1JRB2"/>
<dbReference type="GeneID" id="57975986"/>
<dbReference type="KEGG" id="ypy:YPK_1174"/>
<dbReference type="PATRIC" id="fig|502800.11.peg.1810"/>
<dbReference type="GO" id="GO:0005829">
    <property type="term" value="C:cytosol"/>
    <property type="evidence" value="ECO:0007669"/>
    <property type="project" value="TreeGrafter"/>
</dbReference>
<dbReference type="GO" id="GO:0008861">
    <property type="term" value="F:formate C-acetyltransferase activity"/>
    <property type="evidence" value="ECO:0007669"/>
    <property type="project" value="TreeGrafter"/>
</dbReference>
<dbReference type="FunFam" id="3.20.70.20:FF:000002">
    <property type="entry name" value="Autonomous glycyl radical cofactor"/>
    <property type="match status" value="1"/>
</dbReference>
<dbReference type="Gene3D" id="3.20.70.20">
    <property type="match status" value="1"/>
</dbReference>
<dbReference type="HAMAP" id="MF_00806">
    <property type="entry name" value="GrcA"/>
    <property type="match status" value="1"/>
</dbReference>
<dbReference type="InterPro" id="IPR050244">
    <property type="entry name" value="Auton_GlycylRad_Cofactor"/>
</dbReference>
<dbReference type="InterPro" id="IPR019777">
    <property type="entry name" value="Form_AcTrfase_GR_CS"/>
</dbReference>
<dbReference type="InterPro" id="IPR001150">
    <property type="entry name" value="Gly_radical"/>
</dbReference>
<dbReference type="InterPro" id="IPR011140">
    <property type="entry name" value="Glycyl_radical_cofactor_GrcA"/>
</dbReference>
<dbReference type="NCBIfam" id="TIGR04365">
    <property type="entry name" value="spare_glycyl"/>
    <property type="match status" value="1"/>
</dbReference>
<dbReference type="PANTHER" id="PTHR30191">
    <property type="entry name" value="FORMATE ACETYLTRANSFERASE"/>
    <property type="match status" value="1"/>
</dbReference>
<dbReference type="PANTHER" id="PTHR30191:SF0">
    <property type="entry name" value="FORMATE ACETYLTRANSFERASE 1"/>
    <property type="match status" value="1"/>
</dbReference>
<dbReference type="Pfam" id="PF01228">
    <property type="entry name" value="Gly_radical"/>
    <property type="match status" value="1"/>
</dbReference>
<dbReference type="PIRSF" id="PIRSF000378">
    <property type="entry name" value="Gly_radicl_yfiD"/>
    <property type="match status" value="1"/>
</dbReference>
<dbReference type="SUPFAM" id="SSF51998">
    <property type="entry name" value="PFL-like glycyl radical enzymes"/>
    <property type="match status" value="1"/>
</dbReference>
<dbReference type="PROSITE" id="PS00850">
    <property type="entry name" value="GLY_RADICAL_1"/>
    <property type="match status" value="1"/>
</dbReference>
<dbReference type="PROSITE" id="PS51149">
    <property type="entry name" value="GLY_RADICAL_2"/>
    <property type="match status" value="1"/>
</dbReference>
<comment type="function">
    <text evidence="1">Acts as a radical domain for damaged PFL and possibly other radical proteins.</text>
</comment>
<feature type="chain" id="PRO_1000134006" description="Autonomous glycyl radical cofactor">
    <location>
        <begin position="1"/>
        <end position="127"/>
    </location>
</feature>
<feature type="domain" description="Glycine radical" evidence="1">
    <location>
        <begin position="5"/>
        <end position="127"/>
    </location>
</feature>
<feature type="modified residue" description="Glycine radical" evidence="1">
    <location>
        <position position="102"/>
    </location>
</feature>